<accession>Q55FC2</accession>
<keyword id="KW-1185">Reference proteome</keyword>
<sequence length="88" mass="8820">MSILSALTSISNPMKSSKSSVANGGGRLSMGSNSVACGSCGGGSSSSGTINNADGSKTTYYTYTSPIYTYNYSYSYSSSGSSSSCGCH</sequence>
<evidence type="ECO:0000256" key="1">
    <source>
        <dbReference type="SAM" id="MobiDB-lite"/>
    </source>
</evidence>
<evidence type="ECO:0000305" key="2"/>
<name>HSL9_DICDI</name>
<protein>
    <recommendedName>
        <fullName>HssA/B-like protein 9</fullName>
    </recommendedName>
</protein>
<gene>
    <name type="primary">hssl9</name>
    <name type="ORF">DDB_G0268458</name>
</gene>
<reference key="1">
    <citation type="journal article" date="2005" name="Nature">
        <title>The genome of the social amoeba Dictyostelium discoideum.</title>
        <authorList>
            <person name="Eichinger L."/>
            <person name="Pachebat J.A."/>
            <person name="Gloeckner G."/>
            <person name="Rajandream M.A."/>
            <person name="Sucgang R."/>
            <person name="Berriman M."/>
            <person name="Song J."/>
            <person name="Olsen R."/>
            <person name="Szafranski K."/>
            <person name="Xu Q."/>
            <person name="Tunggal B."/>
            <person name="Kummerfeld S."/>
            <person name="Madera M."/>
            <person name="Konfortov B.A."/>
            <person name="Rivero F."/>
            <person name="Bankier A.T."/>
            <person name="Lehmann R."/>
            <person name="Hamlin N."/>
            <person name="Davies R."/>
            <person name="Gaudet P."/>
            <person name="Fey P."/>
            <person name="Pilcher K."/>
            <person name="Chen G."/>
            <person name="Saunders D."/>
            <person name="Sodergren E.J."/>
            <person name="Davis P."/>
            <person name="Kerhornou A."/>
            <person name="Nie X."/>
            <person name="Hall N."/>
            <person name="Anjard C."/>
            <person name="Hemphill L."/>
            <person name="Bason N."/>
            <person name="Farbrother P."/>
            <person name="Desany B."/>
            <person name="Just E."/>
            <person name="Morio T."/>
            <person name="Rost R."/>
            <person name="Churcher C.M."/>
            <person name="Cooper J."/>
            <person name="Haydock S."/>
            <person name="van Driessche N."/>
            <person name="Cronin A."/>
            <person name="Goodhead I."/>
            <person name="Muzny D.M."/>
            <person name="Mourier T."/>
            <person name="Pain A."/>
            <person name="Lu M."/>
            <person name="Harper D."/>
            <person name="Lindsay R."/>
            <person name="Hauser H."/>
            <person name="James K.D."/>
            <person name="Quiles M."/>
            <person name="Madan Babu M."/>
            <person name="Saito T."/>
            <person name="Buchrieser C."/>
            <person name="Wardroper A."/>
            <person name="Felder M."/>
            <person name="Thangavelu M."/>
            <person name="Johnson D."/>
            <person name="Knights A."/>
            <person name="Loulseged H."/>
            <person name="Mungall K.L."/>
            <person name="Oliver K."/>
            <person name="Price C."/>
            <person name="Quail M.A."/>
            <person name="Urushihara H."/>
            <person name="Hernandez J."/>
            <person name="Rabbinowitsch E."/>
            <person name="Steffen D."/>
            <person name="Sanders M."/>
            <person name="Ma J."/>
            <person name="Kohara Y."/>
            <person name="Sharp S."/>
            <person name="Simmonds M.N."/>
            <person name="Spiegler S."/>
            <person name="Tivey A."/>
            <person name="Sugano S."/>
            <person name="White B."/>
            <person name="Walker D."/>
            <person name="Woodward J.R."/>
            <person name="Winckler T."/>
            <person name="Tanaka Y."/>
            <person name="Shaulsky G."/>
            <person name="Schleicher M."/>
            <person name="Weinstock G.M."/>
            <person name="Rosenthal A."/>
            <person name="Cox E.C."/>
            <person name="Chisholm R.L."/>
            <person name="Gibbs R.A."/>
            <person name="Loomis W.F."/>
            <person name="Platzer M."/>
            <person name="Kay R.R."/>
            <person name="Williams J.G."/>
            <person name="Dear P.H."/>
            <person name="Noegel A.A."/>
            <person name="Barrell B.G."/>
            <person name="Kuspa A."/>
        </authorList>
    </citation>
    <scope>NUCLEOTIDE SEQUENCE [LARGE SCALE GENOMIC DNA]</scope>
    <source>
        <strain>AX4</strain>
    </source>
</reference>
<comment type="similarity">
    <text evidence="2">Belongs to the hssA/B family.</text>
</comment>
<proteinExistence type="inferred from homology"/>
<feature type="chain" id="PRO_0000330379" description="HssA/B-like protein 9">
    <location>
        <begin position="1"/>
        <end position="88"/>
    </location>
</feature>
<feature type="region of interest" description="Disordered" evidence="1">
    <location>
        <begin position="1"/>
        <end position="26"/>
    </location>
</feature>
<feature type="compositionally biased region" description="Polar residues" evidence="1">
    <location>
        <begin position="1"/>
        <end position="14"/>
    </location>
</feature>
<organism>
    <name type="scientific">Dictyostelium discoideum</name>
    <name type="common">Social amoeba</name>
    <dbReference type="NCBI Taxonomy" id="44689"/>
    <lineage>
        <taxon>Eukaryota</taxon>
        <taxon>Amoebozoa</taxon>
        <taxon>Evosea</taxon>
        <taxon>Eumycetozoa</taxon>
        <taxon>Dictyostelia</taxon>
        <taxon>Dictyosteliales</taxon>
        <taxon>Dictyosteliaceae</taxon>
        <taxon>Dictyostelium</taxon>
    </lineage>
</organism>
<dbReference type="EMBL" id="AAFI02000003">
    <property type="protein sequence ID" value="EAL73682.2"/>
    <property type="molecule type" value="Genomic_DNA"/>
</dbReference>
<dbReference type="RefSeq" id="XP_647611.2">
    <property type="nucleotide sequence ID" value="XM_642519.2"/>
</dbReference>
<dbReference type="FunCoup" id="Q55FC2">
    <property type="interactions" value="243"/>
</dbReference>
<dbReference type="PaxDb" id="44689-DDB0252797"/>
<dbReference type="EnsemblProtists" id="EAL73682">
    <property type="protein sequence ID" value="EAL73682"/>
    <property type="gene ID" value="DDB_G0268458"/>
</dbReference>
<dbReference type="GeneID" id="8616423"/>
<dbReference type="KEGG" id="ddi:DDB_G0268458"/>
<dbReference type="dictyBase" id="DDB_G0268458"/>
<dbReference type="HOGENOM" id="CLU_181850_1_0_1"/>
<dbReference type="InParanoid" id="Q55FC2"/>
<dbReference type="PhylomeDB" id="Q55FC2"/>
<dbReference type="PRO" id="PR:Q55FC2"/>
<dbReference type="Proteomes" id="UP000002195">
    <property type="component" value="Chromosome 1"/>
</dbReference>
<dbReference type="GO" id="GO:0030587">
    <property type="term" value="P:sorocarp development"/>
    <property type="evidence" value="ECO:0000318"/>
    <property type="project" value="GO_Central"/>
</dbReference>
<dbReference type="InterPro" id="IPR050533">
    <property type="entry name" value="HssA/B-like_chaperone"/>
</dbReference>
<dbReference type="InterPro" id="IPR008455">
    <property type="entry name" value="HssA/B-related"/>
</dbReference>
<dbReference type="PANTHER" id="PTHR31059">
    <property type="entry name" value="HSSA/B-LIKE PROTEIN 1-RELATED-RELATED"/>
    <property type="match status" value="1"/>
</dbReference>
<dbReference type="PANTHER" id="PTHR31059:SF5">
    <property type="entry name" value="HSSA_B-LIKE PROTEIN 1-RELATED"/>
    <property type="match status" value="1"/>
</dbReference>
<dbReference type="Pfam" id="PF05710">
    <property type="entry name" value="Coiled"/>
    <property type="match status" value="1"/>
</dbReference>